<reference key="1">
    <citation type="submission" date="2007-09" db="EMBL/GenBank/DDBJ databases">
        <title>Complete genome sequence of Rickettsia rickettsii.</title>
        <authorList>
            <person name="Madan A."/>
            <person name="Fahey J."/>
            <person name="Helton E."/>
            <person name="Ketteman M."/>
            <person name="Madan A."/>
            <person name="Rodrigues S."/>
            <person name="Sanchez A."/>
            <person name="Dasch G."/>
            <person name="Eremeeva M."/>
        </authorList>
    </citation>
    <scope>NUCLEOTIDE SEQUENCE [LARGE SCALE GENOMIC DNA]</scope>
    <source>
        <strain>Sheila Smith</strain>
    </source>
</reference>
<name>DNLJ_RICRS</name>
<accession>A8GTF2</accession>
<gene>
    <name evidence="1" type="primary">ligA</name>
    <name type="ordered locus">A1G_06085</name>
</gene>
<keyword id="KW-0227">DNA damage</keyword>
<keyword id="KW-0234">DNA repair</keyword>
<keyword id="KW-0235">DNA replication</keyword>
<keyword id="KW-0436">Ligase</keyword>
<keyword id="KW-0460">Magnesium</keyword>
<keyword id="KW-0464">Manganese</keyword>
<keyword id="KW-0479">Metal-binding</keyword>
<keyword id="KW-0520">NAD</keyword>
<keyword id="KW-0862">Zinc</keyword>
<proteinExistence type="inferred from homology"/>
<evidence type="ECO:0000255" key="1">
    <source>
        <dbReference type="HAMAP-Rule" id="MF_01588"/>
    </source>
</evidence>
<dbReference type="EC" id="6.5.1.2" evidence="1"/>
<dbReference type="EMBL" id="CP000848">
    <property type="protein sequence ID" value="ABV76677.1"/>
    <property type="molecule type" value="Genomic_DNA"/>
</dbReference>
<dbReference type="RefSeq" id="WP_012151229.1">
    <property type="nucleotide sequence ID" value="NZ_CP121767.1"/>
</dbReference>
<dbReference type="SMR" id="A8GTF2"/>
<dbReference type="GeneID" id="79937743"/>
<dbReference type="KEGG" id="rri:A1G_06085"/>
<dbReference type="HOGENOM" id="CLU_007764_2_1_5"/>
<dbReference type="Proteomes" id="UP000006832">
    <property type="component" value="Chromosome"/>
</dbReference>
<dbReference type="GO" id="GO:0005829">
    <property type="term" value="C:cytosol"/>
    <property type="evidence" value="ECO:0007669"/>
    <property type="project" value="TreeGrafter"/>
</dbReference>
<dbReference type="GO" id="GO:0003911">
    <property type="term" value="F:DNA ligase (NAD+) activity"/>
    <property type="evidence" value="ECO:0007669"/>
    <property type="project" value="UniProtKB-UniRule"/>
</dbReference>
<dbReference type="GO" id="GO:0046872">
    <property type="term" value="F:metal ion binding"/>
    <property type="evidence" value="ECO:0007669"/>
    <property type="project" value="UniProtKB-KW"/>
</dbReference>
<dbReference type="GO" id="GO:0006281">
    <property type="term" value="P:DNA repair"/>
    <property type="evidence" value="ECO:0007669"/>
    <property type="project" value="UniProtKB-KW"/>
</dbReference>
<dbReference type="GO" id="GO:0006260">
    <property type="term" value="P:DNA replication"/>
    <property type="evidence" value="ECO:0007669"/>
    <property type="project" value="UniProtKB-KW"/>
</dbReference>
<dbReference type="CDD" id="cd17748">
    <property type="entry name" value="BRCT_DNA_ligase_like"/>
    <property type="match status" value="1"/>
</dbReference>
<dbReference type="CDD" id="cd00114">
    <property type="entry name" value="LIGANc"/>
    <property type="match status" value="1"/>
</dbReference>
<dbReference type="FunFam" id="1.10.150.20:FF:000007">
    <property type="entry name" value="DNA ligase"/>
    <property type="match status" value="1"/>
</dbReference>
<dbReference type="FunFam" id="2.40.50.140:FF:000012">
    <property type="entry name" value="DNA ligase"/>
    <property type="match status" value="1"/>
</dbReference>
<dbReference type="FunFam" id="3.30.470.30:FF:000001">
    <property type="entry name" value="DNA ligase"/>
    <property type="match status" value="1"/>
</dbReference>
<dbReference type="Gene3D" id="1.10.150.20">
    <property type="entry name" value="5' to 3' exonuclease, C-terminal subdomain"/>
    <property type="match status" value="2"/>
</dbReference>
<dbReference type="Gene3D" id="3.40.50.10190">
    <property type="entry name" value="BRCT domain"/>
    <property type="match status" value="1"/>
</dbReference>
<dbReference type="Gene3D" id="3.30.470.30">
    <property type="entry name" value="DNA ligase/mRNA capping enzyme"/>
    <property type="match status" value="1"/>
</dbReference>
<dbReference type="Gene3D" id="1.10.287.610">
    <property type="entry name" value="Helix hairpin bin"/>
    <property type="match status" value="1"/>
</dbReference>
<dbReference type="Gene3D" id="2.40.50.140">
    <property type="entry name" value="Nucleic acid-binding proteins"/>
    <property type="match status" value="1"/>
</dbReference>
<dbReference type="HAMAP" id="MF_01588">
    <property type="entry name" value="DNA_ligase_A"/>
    <property type="match status" value="1"/>
</dbReference>
<dbReference type="InterPro" id="IPR001357">
    <property type="entry name" value="BRCT_dom"/>
</dbReference>
<dbReference type="InterPro" id="IPR036420">
    <property type="entry name" value="BRCT_dom_sf"/>
</dbReference>
<dbReference type="InterPro" id="IPR041663">
    <property type="entry name" value="DisA/LigA_HHH"/>
</dbReference>
<dbReference type="InterPro" id="IPR001679">
    <property type="entry name" value="DNA_ligase"/>
</dbReference>
<dbReference type="InterPro" id="IPR018239">
    <property type="entry name" value="DNA_ligase_AS"/>
</dbReference>
<dbReference type="InterPro" id="IPR033136">
    <property type="entry name" value="DNA_ligase_CS"/>
</dbReference>
<dbReference type="InterPro" id="IPR013839">
    <property type="entry name" value="DNAligase_adenylation"/>
</dbReference>
<dbReference type="InterPro" id="IPR013840">
    <property type="entry name" value="DNAligase_N"/>
</dbReference>
<dbReference type="InterPro" id="IPR012340">
    <property type="entry name" value="NA-bd_OB-fold"/>
</dbReference>
<dbReference type="InterPro" id="IPR004150">
    <property type="entry name" value="NAD_DNA_ligase_OB"/>
</dbReference>
<dbReference type="InterPro" id="IPR010994">
    <property type="entry name" value="RuvA_2-like"/>
</dbReference>
<dbReference type="NCBIfam" id="TIGR00575">
    <property type="entry name" value="dnlj"/>
    <property type="match status" value="1"/>
</dbReference>
<dbReference type="NCBIfam" id="NF005932">
    <property type="entry name" value="PRK07956.1"/>
    <property type="match status" value="1"/>
</dbReference>
<dbReference type="PANTHER" id="PTHR23389">
    <property type="entry name" value="CHROMOSOME TRANSMISSION FIDELITY FACTOR 18"/>
    <property type="match status" value="1"/>
</dbReference>
<dbReference type="PANTHER" id="PTHR23389:SF9">
    <property type="entry name" value="DNA LIGASE"/>
    <property type="match status" value="1"/>
</dbReference>
<dbReference type="Pfam" id="PF00533">
    <property type="entry name" value="BRCT"/>
    <property type="match status" value="1"/>
</dbReference>
<dbReference type="Pfam" id="PF01653">
    <property type="entry name" value="DNA_ligase_aden"/>
    <property type="match status" value="1"/>
</dbReference>
<dbReference type="Pfam" id="PF03120">
    <property type="entry name" value="DNA_ligase_OB"/>
    <property type="match status" value="1"/>
</dbReference>
<dbReference type="Pfam" id="PF12826">
    <property type="entry name" value="HHH_2"/>
    <property type="match status" value="1"/>
</dbReference>
<dbReference type="PIRSF" id="PIRSF001604">
    <property type="entry name" value="LigA"/>
    <property type="match status" value="1"/>
</dbReference>
<dbReference type="SMART" id="SM00292">
    <property type="entry name" value="BRCT"/>
    <property type="match status" value="1"/>
</dbReference>
<dbReference type="SMART" id="SM00532">
    <property type="entry name" value="LIGANc"/>
    <property type="match status" value="1"/>
</dbReference>
<dbReference type="SUPFAM" id="SSF52113">
    <property type="entry name" value="BRCT domain"/>
    <property type="match status" value="1"/>
</dbReference>
<dbReference type="SUPFAM" id="SSF56091">
    <property type="entry name" value="DNA ligase/mRNA capping enzyme, catalytic domain"/>
    <property type="match status" value="1"/>
</dbReference>
<dbReference type="SUPFAM" id="SSF50249">
    <property type="entry name" value="Nucleic acid-binding proteins"/>
    <property type="match status" value="1"/>
</dbReference>
<dbReference type="SUPFAM" id="SSF47781">
    <property type="entry name" value="RuvA domain 2-like"/>
    <property type="match status" value="1"/>
</dbReference>
<dbReference type="PROSITE" id="PS50172">
    <property type="entry name" value="BRCT"/>
    <property type="match status" value="1"/>
</dbReference>
<dbReference type="PROSITE" id="PS01055">
    <property type="entry name" value="DNA_LIGASE_N1"/>
    <property type="match status" value="1"/>
</dbReference>
<dbReference type="PROSITE" id="PS01056">
    <property type="entry name" value="DNA_LIGASE_N2"/>
    <property type="match status" value="1"/>
</dbReference>
<feature type="chain" id="PRO_0000313410" description="DNA ligase">
    <location>
        <begin position="1"/>
        <end position="689"/>
    </location>
</feature>
<feature type="domain" description="BRCT" evidence="1">
    <location>
        <begin position="610"/>
        <end position="689"/>
    </location>
</feature>
<feature type="active site" description="N6-AMP-lysine intermediate" evidence="1">
    <location>
        <position position="123"/>
    </location>
</feature>
<feature type="binding site" evidence="1">
    <location>
        <begin position="40"/>
        <end position="44"/>
    </location>
    <ligand>
        <name>NAD(+)</name>
        <dbReference type="ChEBI" id="CHEBI:57540"/>
    </ligand>
</feature>
<feature type="binding site" evidence="1">
    <location>
        <begin position="89"/>
        <end position="90"/>
    </location>
    <ligand>
        <name>NAD(+)</name>
        <dbReference type="ChEBI" id="CHEBI:57540"/>
    </ligand>
</feature>
<feature type="binding site" evidence="1">
    <location>
        <position position="121"/>
    </location>
    <ligand>
        <name>NAD(+)</name>
        <dbReference type="ChEBI" id="CHEBI:57540"/>
    </ligand>
</feature>
<feature type="binding site" evidence="1">
    <location>
        <position position="144"/>
    </location>
    <ligand>
        <name>NAD(+)</name>
        <dbReference type="ChEBI" id="CHEBI:57540"/>
    </ligand>
</feature>
<feature type="binding site" evidence="1">
    <location>
        <position position="179"/>
    </location>
    <ligand>
        <name>NAD(+)</name>
        <dbReference type="ChEBI" id="CHEBI:57540"/>
    </ligand>
</feature>
<feature type="binding site" evidence="1">
    <location>
        <position position="295"/>
    </location>
    <ligand>
        <name>NAD(+)</name>
        <dbReference type="ChEBI" id="CHEBI:57540"/>
    </ligand>
</feature>
<feature type="binding site" evidence="1">
    <location>
        <position position="319"/>
    </location>
    <ligand>
        <name>NAD(+)</name>
        <dbReference type="ChEBI" id="CHEBI:57540"/>
    </ligand>
</feature>
<feature type="binding site" evidence="1">
    <location>
        <position position="413"/>
    </location>
    <ligand>
        <name>Zn(2+)</name>
        <dbReference type="ChEBI" id="CHEBI:29105"/>
    </ligand>
</feature>
<feature type="binding site" evidence="1">
    <location>
        <position position="416"/>
    </location>
    <ligand>
        <name>Zn(2+)</name>
        <dbReference type="ChEBI" id="CHEBI:29105"/>
    </ligand>
</feature>
<feature type="binding site" evidence="1">
    <location>
        <position position="431"/>
    </location>
    <ligand>
        <name>Zn(2+)</name>
        <dbReference type="ChEBI" id="CHEBI:29105"/>
    </ligand>
</feature>
<feature type="binding site" evidence="1">
    <location>
        <position position="437"/>
    </location>
    <ligand>
        <name>Zn(2+)</name>
        <dbReference type="ChEBI" id="CHEBI:29105"/>
    </ligand>
</feature>
<protein>
    <recommendedName>
        <fullName evidence="1">DNA ligase</fullName>
        <ecNumber evidence="1">6.5.1.2</ecNumber>
    </recommendedName>
    <alternativeName>
        <fullName evidence="1">Polydeoxyribonucleotide synthase [NAD(+)]</fullName>
    </alternativeName>
</protein>
<sequence length="689" mass="77851">MQNIDLISEEEAQKLLEELADKIAAYNHAYYIEDNPLVSDSEYDQLFNTNLKLEQKFPHLILENSPSKKVGAKIANKFAKVTHQVPMLSLSNAFDEQDVRDFVDRIKIFLRLNEFAPIFCEPKIDGVSFSAVYKHGVLTTGATRGDGYVGEDITANIKTIKNFPHKIDNVPEFLEVRGEIYIEKQDFLNLNKEQEEQGKDKFANPRNAAAGSLRQLDSSITAKRPLKYFVYSGGVTEQNLASSQDQLLTKLKECGFNINEISKLASSEEEIFAFYEYLKTNRENLPYEIDGVVYKLNDFALQNRMGFIARNPRFATAHKFPAIIGQTKLLSITVQVGRTGTLTPVAELEPIEIGGVTVSRATLHNFQEIARKDLRIKDYVFLQRAGDVIPKIMGVDFDKRPNDTETFDTPLFCLSCNSKLHYTPEDIIIRCDNGLNCPAQNYERIRHFVSKNAMDIEGLGRKQVEFLIDKGLISNPLDIFFLKEKNDSSLAKLENMDGWGKKSVENLFKNIEKSKNVSLPRFIYALGIRHIGEQNAKLLAREFGSYNNFIAQMELLRTNEPDIYQKLNNLEGIGDKILVDIIDFFDVKENIELIKKLGEILNIEDYKETREQSSLTDKIVVFTGSLPTISRAEAKATAEKLGAKVAVGVSSNTDLVVAGVDAGSKLKKAKELNIKIIDEEEWLTLIKNV</sequence>
<organism>
    <name type="scientific">Rickettsia rickettsii (strain Sheila Smith)</name>
    <dbReference type="NCBI Taxonomy" id="392021"/>
    <lineage>
        <taxon>Bacteria</taxon>
        <taxon>Pseudomonadati</taxon>
        <taxon>Pseudomonadota</taxon>
        <taxon>Alphaproteobacteria</taxon>
        <taxon>Rickettsiales</taxon>
        <taxon>Rickettsiaceae</taxon>
        <taxon>Rickettsieae</taxon>
        <taxon>Rickettsia</taxon>
        <taxon>spotted fever group</taxon>
    </lineage>
</organism>
<comment type="function">
    <text evidence="1">DNA ligase that catalyzes the formation of phosphodiester linkages between 5'-phosphoryl and 3'-hydroxyl groups in double-stranded DNA using NAD as a coenzyme and as the energy source for the reaction. It is essential for DNA replication and repair of damaged DNA.</text>
</comment>
<comment type="catalytic activity">
    <reaction evidence="1">
        <text>NAD(+) + (deoxyribonucleotide)n-3'-hydroxyl + 5'-phospho-(deoxyribonucleotide)m = (deoxyribonucleotide)n+m + AMP + beta-nicotinamide D-nucleotide.</text>
        <dbReference type="EC" id="6.5.1.2"/>
    </reaction>
</comment>
<comment type="cofactor">
    <cofactor evidence="1">
        <name>Mg(2+)</name>
        <dbReference type="ChEBI" id="CHEBI:18420"/>
    </cofactor>
    <cofactor evidence="1">
        <name>Mn(2+)</name>
        <dbReference type="ChEBI" id="CHEBI:29035"/>
    </cofactor>
</comment>
<comment type="similarity">
    <text evidence="1">Belongs to the NAD-dependent DNA ligase family. LigA subfamily.</text>
</comment>